<gene>
    <name evidence="1" type="primary">folD</name>
    <name type="ordered locus">Aasi_0928</name>
</gene>
<protein>
    <recommendedName>
        <fullName evidence="1">Bifunctional protein FolD</fullName>
    </recommendedName>
    <domain>
        <recommendedName>
            <fullName evidence="1">Methylenetetrahydrofolate dehydrogenase</fullName>
            <ecNumber evidence="1">1.5.1.5</ecNumber>
        </recommendedName>
    </domain>
    <domain>
        <recommendedName>
            <fullName evidence="1">Methenyltetrahydrofolate cyclohydrolase</fullName>
            <ecNumber evidence="1">3.5.4.9</ecNumber>
        </recommendedName>
    </domain>
</protein>
<dbReference type="EC" id="1.5.1.5" evidence="1"/>
<dbReference type="EC" id="3.5.4.9" evidence="1"/>
<dbReference type="EMBL" id="CP001102">
    <property type="protein sequence ID" value="ACE06293.1"/>
    <property type="molecule type" value="Genomic_DNA"/>
</dbReference>
<dbReference type="RefSeq" id="WP_012473060.1">
    <property type="nucleotide sequence ID" value="NC_010830.1"/>
</dbReference>
<dbReference type="SMR" id="B3ESU1"/>
<dbReference type="STRING" id="452471.Aasi_0928"/>
<dbReference type="KEGG" id="aas:Aasi_0928"/>
<dbReference type="eggNOG" id="COG0190">
    <property type="taxonomic scope" value="Bacteria"/>
</dbReference>
<dbReference type="HOGENOM" id="CLU_034045_2_1_10"/>
<dbReference type="OrthoDB" id="9803580at2"/>
<dbReference type="UniPathway" id="UPA00193"/>
<dbReference type="Proteomes" id="UP000001227">
    <property type="component" value="Chromosome"/>
</dbReference>
<dbReference type="GO" id="GO:0005829">
    <property type="term" value="C:cytosol"/>
    <property type="evidence" value="ECO:0007669"/>
    <property type="project" value="TreeGrafter"/>
</dbReference>
<dbReference type="GO" id="GO:0004477">
    <property type="term" value="F:methenyltetrahydrofolate cyclohydrolase activity"/>
    <property type="evidence" value="ECO:0007669"/>
    <property type="project" value="UniProtKB-UniRule"/>
</dbReference>
<dbReference type="GO" id="GO:0004488">
    <property type="term" value="F:methylenetetrahydrofolate dehydrogenase (NADP+) activity"/>
    <property type="evidence" value="ECO:0007669"/>
    <property type="project" value="UniProtKB-UniRule"/>
</dbReference>
<dbReference type="GO" id="GO:0000105">
    <property type="term" value="P:L-histidine biosynthetic process"/>
    <property type="evidence" value="ECO:0007669"/>
    <property type="project" value="UniProtKB-KW"/>
</dbReference>
<dbReference type="GO" id="GO:0009086">
    <property type="term" value="P:methionine biosynthetic process"/>
    <property type="evidence" value="ECO:0007669"/>
    <property type="project" value="UniProtKB-KW"/>
</dbReference>
<dbReference type="GO" id="GO:0006164">
    <property type="term" value="P:purine nucleotide biosynthetic process"/>
    <property type="evidence" value="ECO:0007669"/>
    <property type="project" value="UniProtKB-KW"/>
</dbReference>
<dbReference type="GO" id="GO:0035999">
    <property type="term" value="P:tetrahydrofolate interconversion"/>
    <property type="evidence" value="ECO:0007669"/>
    <property type="project" value="UniProtKB-UniRule"/>
</dbReference>
<dbReference type="CDD" id="cd01080">
    <property type="entry name" value="NAD_bind_m-THF_DH_Cyclohyd"/>
    <property type="match status" value="1"/>
</dbReference>
<dbReference type="FunFam" id="3.40.50.720:FF:000189">
    <property type="entry name" value="Bifunctional protein FolD"/>
    <property type="match status" value="1"/>
</dbReference>
<dbReference type="FunFam" id="3.40.50.10860:FF:000005">
    <property type="entry name" value="C-1-tetrahydrofolate synthase, cytoplasmic, putative"/>
    <property type="match status" value="1"/>
</dbReference>
<dbReference type="Gene3D" id="3.40.50.10860">
    <property type="entry name" value="Leucine Dehydrogenase, chain A, domain 1"/>
    <property type="match status" value="1"/>
</dbReference>
<dbReference type="Gene3D" id="3.40.50.720">
    <property type="entry name" value="NAD(P)-binding Rossmann-like Domain"/>
    <property type="match status" value="1"/>
</dbReference>
<dbReference type="HAMAP" id="MF_01576">
    <property type="entry name" value="THF_DHG_CYH"/>
    <property type="match status" value="1"/>
</dbReference>
<dbReference type="InterPro" id="IPR046346">
    <property type="entry name" value="Aminoacid_DH-like_N_sf"/>
</dbReference>
<dbReference type="InterPro" id="IPR036291">
    <property type="entry name" value="NAD(P)-bd_dom_sf"/>
</dbReference>
<dbReference type="InterPro" id="IPR000672">
    <property type="entry name" value="THF_DH/CycHdrlase"/>
</dbReference>
<dbReference type="InterPro" id="IPR020630">
    <property type="entry name" value="THF_DH/CycHdrlase_cat_dom"/>
</dbReference>
<dbReference type="InterPro" id="IPR020867">
    <property type="entry name" value="THF_DH/CycHdrlase_CS"/>
</dbReference>
<dbReference type="InterPro" id="IPR020631">
    <property type="entry name" value="THF_DH/CycHdrlase_NAD-bd_dom"/>
</dbReference>
<dbReference type="PANTHER" id="PTHR48099:SF5">
    <property type="entry name" value="C-1-TETRAHYDROFOLATE SYNTHASE, CYTOPLASMIC"/>
    <property type="match status" value="1"/>
</dbReference>
<dbReference type="PANTHER" id="PTHR48099">
    <property type="entry name" value="C-1-TETRAHYDROFOLATE SYNTHASE, CYTOPLASMIC-RELATED"/>
    <property type="match status" value="1"/>
</dbReference>
<dbReference type="Pfam" id="PF00763">
    <property type="entry name" value="THF_DHG_CYH"/>
    <property type="match status" value="1"/>
</dbReference>
<dbReference type="Pfam" id="PF02882">
    <property type="entry name" value="THF_DHG_CYH_C"/>
    <property type="match status" value="1"/>
</dbReference>
<dbReference type="PRINTS" id="PR00085">
    <property type="entry name" value="THFDHDRGNASE"/>
</dbReference>
<dbReference type="SUPFAM" id="SSF53223">
    <property type="entry name" value="Aminoacid dehydrogenase-like, N-terminal domain"/>
    <property type="match status" value="1"/>
</dbReference>
<dbReference type="SUPFAM" id="SSF51735">
    <property type="entry name" value="NAD(P)-binding Rossmann-fold domains"/>
    <property type="match status" value="1"/>
</dbReference>
<dbReference type="PROSITE" id="PS00767">
    <property type="entry name" value="THF_DHG_CYH_2"/>
    <property type="match status" value="1"/>
</dbReference>
<organism>
    <name type="scientific">Amoebophilus asiaticus (strain 5a2)</name>
    <dbReference type="NCBI Taxonomy" id="452471"/>
    <lineage>
        <taxon>Bacteria</taxon>
        <taxon>Pseudomonadati</taxon>
        <taxon>Bacteroidota</taxon>
        <taxon>Cytophagia</taxon>
        <taxon>Cytophagales</taxon>
        <taxon>Amoebophilaceae</taxon>
        <taxon>Candidatus Amoebophilus</taxon>
    </lineage>
</organism>
<sequence>MAVILDGKQVAHFLRQSLAEQVQTLAKEGKPIPHLAIVLVGDDPASHTYVYNKVKACQEVGFQTTFIQEASHVQESTLLYLIHKLNEDTSIHGIIIQLPLPKHINAIKIIQAITPSKDVDGLHTFNYGRMACNLPTHIPATPLGILLLLEHYQIETAGKHCVIIGRGPTVGAPLSILMSRNAYPGNATVTLCHSYTQQLTNFTRQADILVVAVGKPGLITADMIKPSTTVIDVGITRIPDTTKKRGYRLKGDVAFEEVATLCNAITPVPGGVGPMTIAALLTNTLRAATNQVYNTPTS</sequence>
<comment type="function">
    <text evidence="1">Catalyzes the oxidation of 5,10-methylenetetrahydrofolate to 5,10-methenyltetrahydrofolate and then the hydrolysis of 5,10-methenyltetrahydrofolate to 10-formyltetrahydrofolate.</text>
</comment>
<comment type="catalytic activity">
    <reaction evidence="1">
        <text>(6R)-5,10-methylene-5,6,7,8-tetrahydrofolate + NADP(+) = (6R)-5,10-methenyltetrahydrofolate + NADPH</text>
        <dbReference type="Rhea" id="RHEA:22812"/>
        <dbReference type="ChEBI" id="CHEBI:15636"/>
        <dbReference type="ChEBI" id="CHEBI:57455"/>
        <dbReference type="ChEBI" id="CHEBI:57783"/>
        <dbReference type="ChEBI" id="CHEBI:58349"/>
        <dbReference type="EC" id="1.5.1.5"/>
    </reaction>
</comment>
<comment type="catalytic activity">
    <reaction evidence="1">
        <text>(6R)-5,10-methenyltetrahydrofolate + H2O = (6R)-10-formyltetrahydrofolate + H(+)</text>
        <dbReference type="Rhea" id="RHEA:23700"/>
        <dbReference type="ChEBI" id="CHEBI:15377"/>
        <dbReference type="ChEBI" id="CHEBI:15378"/>
        <dbReference type="ChEBI" id="CHEBI:57455"/>
        <dbReference type="ChEBI" id="CHEBI:195366"/>
        <dbReference type="EC" id="3.5.4.9"/>
    </reaction>
</comment>
<comment type="pathway">
    <text evidence="1">One-carbon metabolism; tetrahydrofolate interconversion.</text>
</comment>
<comment type="subunit">
    <text evidence="1">Homodimer.</text>
</comment>
<comment type="similarity">
    <text evidence="1">Belongs to the tetrahydrofolate dehydrogenase/cyclohydrolase family.</text>
</comment>
<evidence type="ECO:0000255" key="1">
    <source>
        <dbReference type="HAMAP-Rule" id="MF_01576"/>
    </source>
</evidence>
<proteinExistence type="inferred from homology"/>
<reference key="1">
    <citation type="journal article" date="2010" name="J. Bacteriol.">
        <title>The genome of the amoeba symbiont 'Candidatus Amoebophilus asiaticus' reveals common mechanisms for host cell interaction among amoeba-associated bacteria.</title>
        <authorList>
            <person name="Schmitz-Esser S."/>
            <person name="Tischler P."/>
            <person name="Arnold R."/>
            <person name="Montanaro J."/>
            <person name="Wagner M."/>
            <person name="Rattei T."/>
            <person name="Horn M."/>
        </authorList>
    </citation>
    <scope>NUCLEOTIDE SEQUENCE [LARGE SCALE GENOMIC DNA]</scope>
    <source>
        <strain>5a2</strain>
    </source>
</reference>
<feature type="chain" id="PRO_1000196750" description="Bifunctional protein FolD">
    <location>
        <begin position="1"/>
        <end position="298"/>
    </location>
</feature>
<feature type="binding site" evidence="1">
    <location>
        <begin position="165"/>
        <end position="167"/>
    </location>
    <ligand>
        <name>NADP(+)</name>
        <dbReference type="ChEBI" id="CHEBI:58349"/>
    </ligand>
</feature>
<feature type="binding site" evidence="1">
    <location>
        <position position="194"/>
    </location>
    <ligand>
        <name>NADP(+)</name>
        <dbReference type="ChEBI" id="CHEBI:58349"/>
    </ligand>
</feature>
<feature type="binding site" evidence="1">
    <location>
        <position position="235"/>
    </location>
    <ligand>
        <name>NADP(+)</name>
        <dbReference type="ChEBI" id="CHEBI:58349"/>
    </ligand>
</feature>
<accession>B3ESU1</accession>
<name>FOLD_AMOA5</name>
<keyword id="KW-0028">Amino-acid biosynthesis</keyword>
<keyword id="KW-0368">Histidine biosynthesis</keyword>
<keyword id="KW-0378">Hydrolase</keyword>
<keyword id="KW-0486">Methionine biosynthesis</keyword>
<keyword id="KW-0511">Multifunctional enzyme</keyword>
<keyword id="KW-0521">NADP</keyword>
<keyword id="KW-0554">One-carbon metabolism</keyword>
<keyword id="KW-0560">Oxidoreductase</keyword>
<keyword id="KW-0658">Purine biosynthesis</keyword>
<keyword id="KW-1185">Reference proteome</keyword>